<proteinExistence type="evidence at transcript level"/>
<sequence length="624" mass="67762">MNNIEATLFLCFFCIFSSSNVHFAGAKQTAGNITPSENPFTPKASLIRYWNNHINGDSPKPSFFLSKASPLTAVDSTRFASLASNHALNTHHSDFCSAAKLFCFPELAAHSLEKHGDDVNFAAYSGKNFTNYGSDRLSGADSFKNYSGGDNIAVDSFRRYSRNSAGHDDGFTNYAGEVNVADQSFTTYATGTTGGSGEFTNYNTDANEPNGRFTSYSDKANGRSQTFTTYSENGNTGYQSFTSYSKNGNGAPNEFSGYGTGSNVVNTGFTKYGESANGANDSFTSYGENGNVPVNEFKGYGDGGNGAVYGFKNYRDQSNIGVDSFSSYAKNSNNEKVNFVNYGKSFNLGSDNFTGYGQDNVGGNVSFKTYGQGQSFKVYTKDGVVFARYSNNVSSNGKTVNKWVEEGKFFREAMLKEGTLMQMPDIKDKMPKRTFLPRNIVKNLPFSSSTIGEIWRVFGAGENSSMAGIISSAVSECERPASHGETKRCVGSAEDMIDFATSVLGRGVVVRTTENVVGSKKKVVIGKVNGINGGDVTRAVSCHQSLYPYLLYYCHSVPRVRVYETDLLDPKSLEKINHGVAICHIDTSAWSPSHGAFLALGSGPGQIEVCHWIFENDMTWNIID</sequence>
<dbReference type="EMBL" id="AC004473">
    <property type="protein sequence ID" value="AAC24065.1"/>
    <property type="molecule type" value="Genomic_DNA"/>
</dbReference>
<dbReference type="EMBL" id="CP002684">
    <property type="protein sequence ID" value="AEE33681.1"/>
    <property type="molecule type" value="Genomic_DNA"/>
</dbReference>
<dbReference type="EMBL" id="AK227564">
    <property type="protein sequence ID" value="BAE99558.1"/>
    <property type="molecule type" value="mRNA"/>
</dbReference>
<dbReference type="PIR" id="T02289">
    <property type="entry name" value="T02289"/>
</dbReference>
<dbReference type="RefSeq" id="NP_176242.1">
    <property type="nucleotide sequence ID" value="NM_104726.3"/>
</dbReference>
<dbReference type="FunCoup" id="O80760">
    <property type="interactions" value="62"/>
</dbReference>
<dbReference type="STRING" id="3702.O80760"/>
<dbReference type="GlyCosmos" id="O80760">
    <property type="glycosylation" value="7 sites, No reported glycans"/>
</dbReference>
<dbReference type="GlyGen" id="O80760">
    <property type="glycosylation" value="7 sites"/>
</dbReference>
<dbReference type="iPTMnet" id="O80760"/>
<dbReference type="PaxDb" id="3702-AT1G60390.1"/>
<dbReference type="ProteomicsDB" id="234903"/>
<dbReference type="EnsemblPlants" id="AT1G60390.1">
    <property type="protein sequence ID" value="AT1G60390.1"/>
    <property type="gene ID" value="AT1G60390"/>
</dbReference>
<dbReference type="GeneID" id="842334"/>
<dbReference type="Gramene" id="AT1G60390.1">
    <property type="protein sequence ID" value="AT1G60390.1"/>
    <property type="gene ID" value="AT1G60390"/>
</dbReference>
<dbReference type="KEGG" id="ath:AT1G60390"/>
<dbReference type="Araport" id="AT1G60390"/>
<dbReference type="TAIR" id="AT1G60390">
    <property type="gene designation" value="PG1"/>
</dbReference>
<dbReference type="eggNOG" id="ENOG502QT2V">
    <property type="taxonomic scope" value="Eukaryota"/>
</dbReference>
<dbReference type="HOGENOM" id="CLU_011822_5_0_1"/>
<dbReference type="InParanoid" id="O80760"/>
<dbReference type="OMA" id="NFTGYGQ"/>
<dbReference type="PhylomeDB" id="O80760"/>
<dbReference type="PRO" id="PR:O80760"/>
<dbReference type="Proteomes" id="UP000006548">
    <property type="component" value="Chromosome 1"/>
</dbReference>
<dbReference type="ExpressionAtlas" id="O80760">
    <property type="expression patterns" value="baseline and differential"/>
</dbReference>
<dbReference type="GO" id="GO:0048046">
    <property type="term" value="C:apoplast"/>
    <property type="evidence" value="ECO:0007669"/>
    <property type="project" value="UniProtKB-SubCell"/>
</dbReference>
<dbReference type="InterPro" id="IPR004873">
    <property type="entry name" value="BURP_dom"/>
</dbReference>
<dbReference type="InterPro" id="IPR051897">
    <property type="entry name" value="PG-associated_BURP"/>
</dbReference>
<dbReference type="PANTHER" id="PTHR31458">
    <property type="entry name" value="POLYGALACTURONASE 1 BETA-LIKE PROTEIN 2"/>
    <property type="match status" value="1"/>
</dbReference>
<dbReference type="PANTHER" id="PTHR31458:SF2">
    <property type="entry name" value="POLYGALACTURONASE 1 BETA-LIKE PROTEIN 2"/>
    <property type="match status" value="1"/>
</dbReference>
<dbReference type="Pfam" id="PF03181">
    <property type="entry name" value="BURP"/>
    <property type="match status" value="1"/>
</dbReference>
<dbReference type="SMART" id="SM01045">
    <property type="entry name" value="BURP"/>
    <property type="match status" value="1"/>
</dbReference>
<dbReference type="PROSITE" id="PS51277">
    <property type="entry name" value="BURP"/>
    <property type="match status" value="1"/>
</dbReference>
<organism>
    <name type="scientific">Arabidopsis thaliana</name>
    <name type="common">Mouse-ear cress</name>
    <dbReference type="NCBI Taxonomy" id="3702"/>
    <lineage>
        <taxon>Eukaryota</taxon>
        <taxon>Viridiplantae</taxon>
        <taxon>Streptophyta</taxon>
        <taxon>Embryophyta</taxon>
        <taxon>Tracheophyta</taxon>
        <taxon>Spermatophyta</taxon>
        <taxon>Magnoliopsida</taxon>
        <taxon>eudicotyledons</taxon>
        <taxon>Gunneridae</taxon>
        <taxon>Pentapetalae</taxon>
        <taxon>rosids</taxon>
        <taxon>malvids</taxon>
        <taxon>Brassicales</taxon>
        <taxon>Brassicaceae</taxon>
        <taxon>Camelineae</taxon>
        <taxon>Arabidopsis</taxon>
    </lineage>
</organism>
<accession>O80760</accession>
<accession>Q0WTJ0</accession>
<name>PGL2_ARATH</name>
<feature type="signal peptide" evidence="2">
    <location>
        <begin position="1"/>
        <end position="26"/>
    </location>
</feature>
<feature type="chain" id="PRO_0000042957" description="Polygalacturonase 1 beta-like protein 2">
    <location>
        <begin position="27"/>
        <end position="624"/>
    </location>
</feature>
<feature type="repeat" description="FXXY 1" evidence="9">
    <location>
        <begin position="121"/>
        <end position="124"/>
    </location>
</feature>
<feature type="repeat" description="FXXY 2" evidence="9">
    <location>
        <begin position="129"/>
        <end position="132"/>
    </location>
</feature>
<feature type="repeat" description="FXXY 3" evidence="9">
    <location>
        <begin position="143"/>
        <end position="146"/>
    </location>
</feature>
<feature type="repeat" description="FXXY 4" evidence="9">
    <location>
        <begin position="157"/>
        <end position="160"/>
    </location>
</feature>
<feature type="repeat" description="FXXY 5" evidence="9">
    <location>
        <begin position="171"/>
        <end position="174"/>
    </location>
</feature>
<feature type="repeat" description="FXXY 6" evidence="9">
    <location>
        <begin position="185"/>
        <end position="188"/>
    </location>
</feature>
<feature type="repeat" description="FXXY 7" evidence="9">
    <location>
        <begin position="199"/>
        <end position="202"/>
    </location>
</feature>
<feature type="repeat" description="FXXY 8" evidence="9">
    <location>
        <begin position="213"/>
        <end position="216"/>
    </location>
</feature>
<feature type="repeat" description="FXXY 9" evidence="9">
    <location>
        <begin position="227"/>
        <end position="230"/>
    </location>
</feature>
<feature type="repeat" description="FXXY 10" evidence="9">
    <location>
        <begin position="241"/>
        <end position="244"/>
    </location>
</feature>
<feature type="repeat" description="FXXY 11" evidence="9">
    <location>
        <begin position="255"/>
        <end position="258"/>
    </location>
</feature>
<feature type="repeat" description="FXXY 12" evidence="9">
    <location>
        <begin position="269"/>
        <end position="272"/>
    </location>
</feature>
<feature type="repeat" description="FXXY 13" evidence="9">
    <location>
        <begin position="283"/>
        <end position="286"/>
    </location>
</feature>
<feature type="repeat" description="FXXY 14" evidence="9">
    <location>
        <begin position="297"/>
        <end position="300"/>
    </location>
</feature>
<feature type="repeat" description="FXXY 15" evidence="9">
    <location>
        <begin position="311"/>
        <end position="314"/>
    </location>
</feature>
<feature type="repeat" description="FXXY 16" evidence="9">
    <location>
        <begin position="325"/>
        <end position="328"/>
    </location>
</feature>
<feature type="repeat" description="FXXY 17" evidence="9">
    <location>
        <begin position="339"/>
        <end position="342"/>
    </location>
</feature>
<feature type="repeat" description="FXXY 18" evidence="9">
    <location>
        <begin position="353"/>
        <end position="356"/>
    </location>
</feature>
<feature type="repeat" description="FXXY 19" evidence="9">
    <location>
        <begin position="367"/>
        <end position="370"/>
    </location>
</feature>
<feature type="repeat" description="FXXY 20" evidence="9">
    <location>
        <begin position="376"/>
        <end position="379"/>
    </location>
</feature>
<feature type="repeat" description="FXXY 21" evidence="9">
    <location>
        <begin position="386"/>
        <end position="389"/>
    </location>
</feature>
<feature type="domain" description="BURP" evidence="3">
    <location>
        <begin position="409"/>
        <end position="623"/>
    </location>
</feature>
<feature type="region of interest" description="Disordered" evidence="4">
    <location>
        <begin position="199"/>
        <end position="219"/>
    </location>
</feature>
<feature type="glycosylation site" description="N-linked (GlcNAc...) asparagine" evidence="2">
    <location>
        <position position="128"/>
    </location>
</feature>
<feature type="glycosylation site" description="N-linked (GlcNAc...) asparagine" evidence="2">
    <location>
        <position position="145"/>
    </location>
</feature>
<feature type="glycosylation site" description="N-linked (GlcNAc...) asparagine" evidence="2">
    <location>
        <position position="280"/>
    </location>
</feature>
<feature type="glycosylation site" description="N-linked (GlcNAc...) asparagine" evidence="2">
    <location>
        <position position="352"/>
    </location>
</feature>
<feature type="glycosylation site" description="N-linked (GlcNAc...) asparagine" evidence="2">
    <location>
        <position position="364"/>
    </location>
</feature>
<feature type="glycosylation site" description="N-linked (GlcNAc...) asparagine" evidence="2">
    <location>
        <position position="392"/>
    </location>
</feature>
<feature type="glycosylation site" description="N-linked (GlcNAc...) asparagine" evidence="2">
    <location>
        <position position="463"/>
    </location>
</feature>
<gene>
    <name evidence="8" type="primary">PGL2</name>
    <name evidence="7" type="synonym">PG1</name>
    <name evidence="10" type="ordered locus">At1g60390</name>
    <name evidence="11" type="ORF">T13D8.26</name>
</gene>
<evidence type="ECO:0000250" key="1">
    <source>
        <dbReference type="UniProtKB" id="P92990"/>
    </source>
</evidence>
<evidence type="ECO:0000255" key="2"/>
<evidence type="ECO:0000255" key="3">
    <source>
        <dbReference type="PROSITE-ProRule" id="PRU00604"/>
    </source>
</evidence>
<evidence type="ECO:0000256" key="4">
    <source>
        <dbReference type="SAM" id="MobiDB-lite"/>
    </source>
</evidence>
<evidence type="ECO:0000269" key="5">
    <source>
    </source>
</evidence>
<evidence type="ECO:0000269" key="6">
    <source>
    </source>
</evidence>
<evidence type="ECO:0000303" key="7">
    <source>
    </source>
</evidence>
<evidence type="ECO:0000303" key="8">
    <source>
    </source>
</evidence>
<evidence type="ECO:0000305" key="9"/>
<evidence type="ECO:0000312" key="10">
    <source>
        <dbReference type="Araport" id="AT1G60390"/>
    </source>
</evidence>
<evidence type="ECO:0000312" key="11">
    <source>
        <dbReference type="EMBL" id="AAC24065.1"/>
    </source>
</evidence>
<reference key="1">
    <citation type="journal article" date="2000" name="Nature">
        <title>Sequence and analysis of chromosome 1 of the plant Arabidopsis thaliana.</title>
        <authorList>
            <person name="Theologis A."/>
            <person name="Ecker J.R."/>
            <person name="Palm C.J."/>
            <person name="Federspiel N.A."/>
            <person name="Kaul S."/>
            <person name="White O."/>
            <person name="Alonso J."/>
            <person name="Altafi H."/>
            <person name="Araujo R."/>
            <person name="Bowman C.L."/>
            <person name="Brooks S.Y."/>
            <person name="Buehler E."/>
            <person name="Chan A."/>
            <person name="Chao Q."/>
            <person name="Chen H."/>
            <person name="Cheuk R.F."/>
            <person name="Chin C.W."/>
            <person name="Chung M.K."/>
            <person name="Conn L."/>
            <person name="Conway A.B."/>
            <person name="Conway A.R."/>
            <person name="Creasy T.H."/>
            <person name="Dewar K."/>
            <person name="Dunn P."/>
            <person name="Etgu P."/>
            <person name="Feldblyum T.V."/>
            <person name="Feng J.-D."/>
            <person name="Fong B."/>
            <person name="Fujii C.Y."/>
            <person name="Gill J.E."/>
            <person name="Goldsmith A.D."/>
            <person name="Haas B."/>
            <person name="Hansen N.F."/>
            <person name="Hughes B."/>
            <person name="Huizar L."/>
            <person name="Hunter J.L."/>
            <person name="Jenkins J."/>
            <person name="Johnson-Hopson C."/>
            <person name="Khan S."/>
            <person name="Khaykin E."/>
            <person name="Kim C.J."/>
            <person name="Koo H.L."/>
            <person name="Kremenetskaia I."/>
            <person name="Kurtz D.B."/>
            <person name="Kwan A."/>
            <person name="Lam B."/>
            <person name="Langin-Hooper S."/>
            <person name="Lee A."/>
            <person name="Lee J.M."/>
            <person name="Lenz C.A."/>
            <person name="Li J.H."/>
            <person name="Li Y.-P."/>
            <person name="Lin X."/>
            <person name="Liu S.X."/>
            <person name="Liu Z.A."/>
            <person name="Luros J.S."/>
            <person name="Maiti R."/>
            <person name="Marziali A."/>
            <person name="Militscher J."/>
            <person name="Miranda M."/>
            <person name="Nguyen M."/>
            <person name="Nierman W.C."/>
            <person name="Osborne B.I."/>
            <person name="Pai G."/>
            <person name="Peterson J."/>
            <person name="Pham P.K."/>
            <person name="Rizzo M."/>
            <person name="Rooney T."/>
            <person name="Rowley D."/>
            <person name="Sakano H."/>
            <person name="Salzberg S.L."/>
            <person name="Schwartz J.R."/>
            <person name="Shinn P."/>
            <person name="Southwick A.M."/>
            <person name="Sun H."/>
            <person name="Tallon L.J."/>
            <person name="Tambunga G."/>
            <person name="Toriumi M.J."/>
            <person name="Town C.D."/>
            <person name="Utterback T."/>
            <person name="Van Aken S."/>
            <person name="Vaysberg M."/>
            <person name="Vysotskaia V.S."/>
            <person name="Walker M."/>
            <person name="Wu D."/>
            <person name="Yu G."/>
            <person name="Fraser C.M."/>
            <person name="Venter J.C."/>
            <person name="Davis R.W."/>
        </authorList>
    </citation>
    <scope>NUCLEOTIDE SEQUENCE [LARGE SCALE GENOMIC DNA]</scope>
    <source>
        <strain>cv. Columbia</strain>
    </source>
</reference>
<reference key="2">
    <citation type="journal article" date="2017" name="Plant J.">
        <title>Araport11: a complete reannotation of the Arabidopsis thaliana reference genome.</title>
        <authorList>
            <person name="Cheng C.Y."/>
            <person name="Krishnakumar V."/>
            <person name="Chan A.P."/>
            <person name="Thibaud-Nissen F."/>
            <person name="Schobel S."/>
            <person name="Town C.D."/>
        </authorList>
    </citation>
    <scope>GENOME REANNOTATION</scope>
    <source>
        <strain>cv. Columbia</strain>
    </source>
</reference>
<reference key="3">
    <citation type="submission" date="2006-07" db="EMBL/GenBank/DDBJ databases">
        <title>Large-scale analysis of RIKEN Arabidopsis full-length (RAFL) cDNAs.</title>
        <authorList>
            <person name="Totoki Y."/>
            <person name="Seki M."/>
            <person name="Ishida J."/>
            <person name="Nakajima M."/>
            <person name="Enju A."/>
            <person name="Kamiya A."/>
            <person name="Narusaka M."/>
            <person name="Shin-i T."/>
            <person name="Nakagawa M."/>
            <person name="Sakamoto N."/>
            <person name="Oishi K."/>
            <person name="Kohara Y."/>
            <person name="Kobayashi M."/>
            <person name="Toyoda A."/>
            <person name="Sakaki Y."/>
            <person name="Sakurai T."/>
            <person name="Iida K."/>
            <person name="Akiyama K."/>
            <person name="Satou M."/>
            <person name="Toyoda T."/>
            <person name="Konagaya A."/>
            <person name="Carninci P."/>
            <person name="Kawai J."/>
            <person name="Hayashizaki Y."/>
            <person name="Shinozaki K."/>
        </authorList>
    </citation>
    <scope>NUCLEOTIDE SEQUENCE [LARGE SCALE MRNA]</scope>
    <source>
        <strain>cv. Columbia</strain>
    </source>
</reference>
<reference key="4">
    <citation type="journal article" date="1998" name="Mol. Gen. Genet.">
        <title>A conserved BURP domain defines a novel group of plant proteins with unusual primary structures.</title>
        <authorList>
            <person name="Hattori J."/>
            <person name="Boutilier K.A."/>
            <person name="van Lookeren Campagne M.M."/>
            <person name="Miki B.L."/>
        </authorList>
    </citation>
    <scope>DOMAIN</scope>
</reference>
<reference key="5">
    <citation type="journal article" date="2009" name="Plant Mol. Biol.">
        <title>The BURP domain protein AtUSPL1 of Arabidopsis thaliana is destined to the protein storage vacuoles and overexpression of the cognate gene distorts seed development.</title>
        <authorList>
            <person name="Van Son L."/>
            <person name="Tiedemann J."/>
            <person name="Rutten T."/>
            <person name="Hillmer S."/>
            <person name="Hinz G."/>
            <person name="Zank T."/>
            <person name="Manteuffel R."/>
            <person name="Baeumlein H."/>
        </authorList>
    </citation>
    <scope>GENE FAMILY</scope>
    <scope>NOMENCLATURE</scope>
</reference>
<reference key="6">
    <citation type="journal article" date="2015" name="Front. Plant Sci.">
        <title>AtPGL3 is an Arabidopsis BURP domain protein that is localized to the cell wall and promotes cell enlargement.</title>
        <authorList>
            <person name="Park J."/>
            <person name="Cui Y."/>
            <person name="Kang B.H."/>
        </authorList>
    </citation>
    <scope>GENE FAMILY</scope>
    <scope>NOMENCLATURE</scope>
    <scope>TISSUE SPECIFICITY</scope>
    <scope>DEVELOPMENTAL STAGE</scope>
    <scope>DISRUPTION PHENOTYPE</scope>
</reference>
<comment type="function">
    <text evidence="1">Involved in cell size determination.</text>
</comment>
<comment type="subcellular location">
    <subcellularLocation>
        <location evidence="1">Secreted</location>
        <location evidence="1">Extracellular space</location>
        <location evidence="1">Apoplast</location>
    </subcellularLocation>
    <subcellularLocation>
        <location evidence="1">Secreted</location>
        <location evidence="1">Cell wall</location>
    </subcellularLocation>
</comment>
<comment type="tissue specificity">
    <text evidence="5">Expressed in flowers and stems.</text>
</comment>
<comment type="developmental stage">
    <text evidence="5">Barely detectable in 6 days after-germination (DAG) seedlings, but highly expressed in 14 DAG seedlings.</text>
</comment>
<comment type="domain">
    <text evidence="6">The BURP domain located at the C-terminus has not been identified in non-plant proteins.</text>
</comment>
<comment type="disruption phenotype">
    <text evidence="5">No visible phenotype. Atpgl1, atpgl2 and atpgl3 triple mutants produce smaller leaves and petioles.</text>
</comment>
<keyword id="KW-0052">Apoplast</keyword>
<keyword id="KW-0134">Cell wall</keyword>
<keyword id="KW-0325">Glycoprotein</keyword>
<keyword id="KW-1185">Reference proteome</keyword>
<keyword id="KW-0677">Repeat</keyword>
<keyword id="KW-0964">Secreted</keyword>
<keyword id="KW-0732">Signal</keyword>
<protein>
    <recommendedName>
        <fullName evidence="8">Polygalacturonase 1 beta-like protein 2</fullName>
        <shortName evidence="8">AtPGL2</shortName>
    </recommendedName>
    <alternativeName>
        <fullName>Aromatic-rich glycoprotein At1g60390</fullName>
    </alternativeName>
    <alternativeName>
        <fullName evidence="8">PG1beta-like protein 2</fullName>
    </alternativeName>
    <alternativeName>
        <fullName evidence="7">Polygalacturonase 1</fullName>
    </alternativeName>
    <alternativeName>
        <fullName>Probable polygalacturonase non-catalytic subunit At1g60390</fullName>
    </alternativeName>
</protein>